<organism>
    <name type="scientific">Arabidopsis thaliana</name>
    <name type="common">Mouse-ear cress</name>
    <dbReference type="NCBI Taxonomy" id="3702"/>
    <lineage>
        <taxon>Eukaryota</taxon>
        <taxon>Viridiplantae</taxon>
        <taxon>Streptophyta</taxon>
        <taxon>Embryophyta</taxon>
        <taxon>Tracheophyta</taxon>
        <taxon>Spermatophyta</taxon>
        <taxon>Magnoliopsida</taxon>
        <taxon>eudicotyledons</taxon>
        <taxon>Gunneridae</taxon>
        <taxon>Pentapetalae</taxon>
        <taxon>rosids</taxon>
        <taxon>malvids</taxon>
        <taxon>Brassicales</taxon>
        <taxon>Brassicaceae</taxon>
        <taxon>Camelineae</taxon>
        <taxon>Arabidopsis</taxon>
    </lineage>
</organism>
<reference key="1">
    <citation type="journal article" date="2000" name="Nature">
        <title>Sequence and analysis of chromosome 1 of the plant Arabidopsis thaliana.</title>
        <authorList>
            <person name="Theologis A."/>
            <person name="Ecker J.R."/>
            <person name="Palm C.J."/>
            <person name="Federspiel N.A."/>
            <person name="Kaul S."/>
            <person name="White O."/>
            <person name="Alonso J."/>
            <person name="Altafi H."/>
            <person name="Araujo R."/>
            <person name="Bowman C.L."/>
            <person name="Brooks S.Y."/>
            <person name="Buehler E."/>
            <person name="Chan A."/>
            <person name="Chao Q."/>
            <person name="Chen H."/>
            <person name="Cheuk R.F."/>
            <person name="Chin C.W."/>
            <person name="Chung M.K."/>
            <person name="Conn L."/>
            <person name="Conway A.B."/>
            <person name="Conway A.R."/>
            <person name="Creasy T.H."/>
            <person name="Dewar K."/>
            <person name="Dunn P."/>
            <person name="Etgu P."/>
            <person name="Feldblyum T.V."/>
            <person name="Feng J.-D."/>
            <person name="Fong B."/>
            <person name="Fujii C.Y."/>
            <person name="Gill J.E."/>
            <person name="Goldsmith A.D."/>
            <person name="Haas B."/>
            <person name="Hansen N.F."/>
            <person name="Hughes B."/>
            <person name="Huizar L."/>
            <person name="Hunter J.L."/>
            <person name="Jenkins J."/>
            <person name="Johnson-Hopson C."/>
            <person name="Khan S."/>
            <person name="Khaykin E."/>
            <person name="Kim C.J."/>
            <person name="Koo H.L."/>
            <person name="Kremenetskaia I."/>
            <person name="Kurtz D.B."/>
            <person name="Kwan A."/>
            <person name="Lam B."/>
            <person name="Langin-Hooper S."/>
            <person name="Lee A."/>
            <person name="Lee J.M."/>
            <person name="Lenz C.A."/>
            <person name="Li J.H."/>
            <person name="Li Y.-P."/>
            <person name="Lin X."/>
            <person name="Liu S.X."/>
            <person name="Liu Z.A."/>
            <person name="Luros J.S."/>
            <person name="Maiti R."/>
            <person name="Marziali A."/>
            <person name="Militscher J."/>
            <person name="Miranda M."/>
            <person name="Nguyen M."/>
            <person name="Nierman W.C."/>
            <person name="Osborne B.I."/>
            <person name="Pai G."/>
            <person name="Peterson J."/>
            <person name="Pham P.K."/>
            <person name="Rizzo M."/>
            <person name="Rooney T."/>
            <person name="Rowley D."/>
            <person name="Sakano H."/>
            <person name="Salzberg S.L."/>
            <person name="Schwartz J.R."/>
            <person name="Shinn P."/>
            <person name="Southwick A.M."/>
            <person name="Sun H."/>
            <person name="Tallon L.J."/>
            <person name="Tambunga G."/>
            <person name="Toriumi M.J."/>
            <person name="Town C.D."/>
            <person name="Utterback T."/>
            <person name="Van Aken S."/>
            <person name="Vaysberg M."/>
            <person name="Vysotskaia V.S."/>
            <person name="Walker M."/>
            <person name="Wu D."/>
            <person name="Yu G."/>
            <person name="Fraser C.M."/>
            <person name="Venter J.C."/>
            <person name="Davis R.W."/>
        </authorList>
    </citation>
    <scope>NUCLEOTIDE SEQUENCE [LARGE SCALE GENOMIC DNA]</scope>
    <source>
        <strain>cv. Columbia</strain>
    </source>
</reference>
<reference key="2">
    <citation type="journal article" date="2017" name="Plant J.">
        <title>Araport11: a complete reannotation of the Arabidopsis thaliana reference genome.</title>
        <authorList>
            <person name="Cheng C.Y."/>
            <person name="Krishnakumar V."/>
            <person name="Chan A.P."/>
            <person name="Thibaud-Nissen F."/>
            <person name="Schobel S."/>
            <person name="Town C.D."/>
        </authorList>
    </citation>
    <scope>GENOME REANNOTATION</scope>
    <source>
        <strain>cv. Columbia</strain>
    </source>
</reference>
<reference key="3">
    <citation type="journal article" date="2003" name="Science">
        <title>Empirical analysis of transcriptional activity in the Arabidopsis genome.</title>
        <authorList>
            <person name="Yamada K."/>
            <person name="Lim J."/>
            <person name="Dale J.M."/>
            <person name="Chen H."/>
            <person name="Shinn P."/>
            <person name="Palm C.J."/>
            <person name="Southwick A.M."/>
            <person name="Wu H.C."/>
            <person name="Kim C.J."/>
            <person name="Nguyen M."/>
            <person name="Pham P.K."/>
            <person name="Cheuk R.F."/>
            <person name="Karlin-Newmann G."/>
            <person name="Liu S.X."/>
            <person name="Lam B."/>
            <person name="Sakano H."/>
            <person name="Wu T."/>
            <person name="Yu G."/>
            <person name="Miranda M."/>
            <person name="Quach H.L."/>
            <person name="Tripp M."/>
            <person name="Chang C.H."/>
            <person name="Lee J.M."/>
            <person name="Toriumi M.J."/>
            <person name="Chan M.M."/>
            <person name="Tang C.C."/>
            <person name="Onodera C.S."/>
            <person name="Deng J.M."/>
            <person name="Akiyama K."/>
            <person name="Ansari Y."/>
            <person name="Arakawa T."/>
            <person name="Banh J."/>
            <person name="Banno F."/>
            <person name="Bowser L."/>
            <person name="Brooks S.Y."/>
            <person name="Carninci P."/>
            <person name="Chao Q."/>
            <person name="Choy N."/>
            <person name="Enju A."/>
            <person name="Goldsmith A.D."/>
            <person name="Gurjal M."/>
            <person name="Hansen N.F."/>
            <person name="Hayashizaki Y."/>
            <person name="Johnson-Hopson C."/>
            <person name="Hsuan V.W."/>
            <person name="Iida K."/>
            <person name="Karnes M."/>
            <person name="Khan S."/>
            <person name="Koesema E."/>
            <person name="Ishida J."/>
            <person name="Jiang P.X."/>
            <person name="Jones T."/>
            <person name="Kawai J."/>
            <person name="Kamiya A."/>
            <person name="Meyers C."/>
            <person name="Nakajima M."/>
            <person name="Narusaka M."/>
            <person name="Seki M."/>
            <person name="Sakurai T."/>
            <person name="Satou M."/>
            <person name="Tamse R."/>
            <person name="Vaysberg M."/>
            <person name="Wallender E.K."/>
            <person name="Wong C."/>
            <person name="Yamamura Y."/>
            <person name="Yuan S."/>
            <person name="Shinozaki K."/>
            <person name="Davis R.W."/>
            <person name="Theologis A."/>
            <person name="Ecker J.R."/>
        </authorList>
    </citation>
    <scope>NUCLEOTIDE SEQUENCE [LARGE SCALE MRNA]</scope>
    <source>
        <strain>cv. Columbia</strain>
    </source>
</reference>
<keyword id="KW-1185">Reference proteome</keyword>
<keyword id="KW-0694">RNA-binding</keyword>
<keyword id="KW-0804">Transcription</keyword>
<keyword id="KW-0805">Transcription regulation</keyword>
<accession>P0CJ66</accession>
<accession>Q9LFY2</accession>
<sequence>MSRKRDKPYTNRHTPARISKRRRPWAPSSSEHDEIIDKPITKPPPPPALVVMGLPANCSVLELKSRFEIYGSISRIRIHKDGIGSVSYRTAESAEAAIAGSHEPSFGISIDSKKLEVVWATDPLVKWKEGVTAGEGKERTSSFSSKLLRPVMPLRKHGRSSRLASAIVNPRSDNTKGISGDGGISSPATTSEVKQRNIVTYDDIV</sequence>
<gene>
    <name type="ordered locus">At1g27050</name>
    <name type="ORF">T7N9.11</name>
</gene>
<comment type="sequence caution" evidence="3">
    <conflict type="erroneous gene model prediction">
        <sequence resource="EMBL-CDS" id="AAF79854"/>
    </conflict>
    <text>The predicted gene has been split into 2 genes: At1g27045 and At1g27050.</text>
</comment>
<name>Y1705_ARATH</name>
<proteinExistence type="evidence at transcript level"/>
<dbReference type="EMBL" id="AC000348">
    <property type="protein sequence ID" value="AAF79854.1"/>
    <property type="status" value="ALT_SEQ"/>
    <property type="molecule type" value="Genomic_DNA"/>
</dbReference>
<dbReference type="EMBL" id="CP002684">
    <property type="protein sequence ID" value="AEE30774.1"/>
    <property type="molecule type" value="Genomic_DNA"/>
</dbReference>
<dbReference type="EMBL" id="AF462825">
    <property type="status" value="NOT_ANNOTATED_CDS"/>
    <property type="molecule type" value="mRNA"/>
</dbReference>
<dbReference type="RefSeq" id="NP_174025.4">
    <property type="nucleotide sequence ID" value="NM_102467.6"/>
</dbReference>
<dbReference type="FunCoup" id="P0CJ66">
    <property type="interactions" value="480"/>
</dbReference>
<dbReference type="STRING" id="3702.P0CJ66"/>
<dbReference type="iPTMnet" id="P0CJ66"/>
<dbReference type="PaxDb" id="3702-AT1G27050.1"/>
<dbReference type="ProteomicsDB" id="243037"/>
<dbReference type="EnsemblPlants" id="AT1G27050.1">
    <property type="protein sequence ID" value="AT1G27050.1"/>
    <property type="gene ID" value="AT1G27050"/>
</dbReference>
<dbReference type="GeneID" id="839594"/>
<dbReference type="Gramene" id="AT1G27050.1">
    <property type="protein sequence ID" value="AT1G27050.1"/>
    <property type="gene ID" value="AT1G27050"/>
</dbReference>
<dbReference type="KEGG" id="ath:AT1G27050"/>
<dbReference type="Araport" id="AT1G27050"/>
<dbReference type="TAIR" id="AT1G27050"/>
<dbReference type="eggNOG" id="KOG0483">
    <property type="taxonomic scope" value="Eukaryota"/>
</dbReference>
<dbReference type="HOGENOM" id="CLU_117878_0_0_1"/>
<dbReference type="InParanoid" id="P0CJ66"/>
<dbReference type="OMA" id="VPQWREG"/>
<dbReference type="PRO" id="PR:P0CJ66"/>
<dbReference type="Proteomes" id="UP000006548">
    <property type="component" value="Chromosome 1"/>
</dbReference>
<dbReference type="ExpressionAtlas" id="P0CJ66">
    <property type="expression patterns" value="baseline and differential"/>
</dbReference>
<dbReference type="GO" id="GO:0003700">
    <property type="term" value="F:DNA-binding transcription factor activity"/>
    <property type="evidence" value="ECO:0000250"/>
    <property type="project" value="TAIR"/>
</dbReference>
<dbReference type="GO" id="GO:0003723">
    <property type="term" value="F:RNA binding"/>
    <property type="evidence" value="ECO:0007669"/>
    <property type="project" value="UniProtKB-KW"/>
</dbReference>
<dbReference type="CDD" id="cd00590">
    <property type="entry name" value="RRM_SF"/>
    <property type="match status" value="1"/>
</dbReference>
<dbReference type="Gene3D" id="3.30.70.330">
    <property type="match status" value="1"/>
</dbReference>
<dbReference type="InterPro" id="IPR012677">
    <property type="entry name" value="Nucleotide-bd_a/b_plait_sf"/>
</dbReference>
<dbReference type="InterPro" id="IPR035979">
    <property type="entry name" value="RBD_domain_sf"/>
</dbReference>
<dbReference type="InterPro" id="IPR000504">
    <property type="entry name" value="RRM_dom"/>
</dbReference>
<dbReference type="Pfam" id="PF00076">
    <property type="entry name" value="RRM_1"/>
    <property type="match status" value="1"/>
</dbReference>
<dbReference type="SMART" id="SM00360">
    <property type="entry name" value="RRM"/>
    <property type="match status" value="1"/>
</dbReference>
<dbReference type="SUPFAM" id="SSF54928">
    <property type="entry name" value="RNA-binding domain, RBD"/>
    <property type="match status" value="1"/>
</dbReference>
<dbReference type="PROSITE" id="PS50102">
    <property type="entry name" value="RRM"/>
    <property type="match status" value="1"/>
</dbReference>
<protein>
    <recommendedName>
        <fullName>Uncharacterized protein At1g27050</fullName>
    </recommendedName>
</protein>
<evidence type="ECO:0000255" key="1">
    <source>
        <dbReference type="PROSITE-ProRule" id="PRU00176"/>
    </source>
</evidence>
<evidence type="ECO:0000256" key="2">
    <source>
        <dbReference type="SAM" id="MobiDB-lite"/>
    </source>
</evidence>
<evidence type="ECO:0000305" key="3"/>
<feature type="chain" id="PRO_0000404518" description="Uncharacterized protein At1g27050">
    <location>
        <begin position="1"/>
        <end position="205"/>
    </location>
</feature>
<feature type="domain" description="RRM" evidence="1">
    <location>
        <begin position="47"/>
        <end position="122"/>
    </location>
</feature>
<feature type="region of interest" description="Disordered" evidence="2">
    <location>
        <begin position="1"/>
        <end position="42"/>
    </location>
</feature>
<feature type="region of interest" description="Disordered" evidence="2">
    <location>
        <begin position="170"/>
        <end position="191"/>
    </location>
</feature>
<feature type="compositionally biased region" description="Basic residues" evidence="2">
    <location>
        <begin position="14"/>
        <end position="24"/>
    </location>
</feature>
<feature type="compositionally biased region" description="Basic and acidic residues" evidence="2">
    <location>
        <begin position="30"/>
        <end position="40"/>
    </location>
</feature>